<comment type="function">
    <text evidence="1">Insulin decreases blood glucose concentration. It increases cell permeability to monosaccharides, amino acids and fatty acids. It accelerates glycolysis, the pentose phosphate cycle, and glycogen synthesis in liver (By similarity).</text>
</comment>
<comment type="subunit">
    <text evidence="1">Heterodimer of a B chain and an A chain linked by two disulfide bonds.</text>
</comment>
<comment type="subcellular location">
    <subcellularLocation>
        <location evidence="1">Secreted</location>
    </subcellularLocation>
</comment>
<comment type="similarity">
    <text evidence="3">Belongs to the insulin family.</text>
</comment>
<evidence type="ECO:0000250" key="1"/>
<evidence type="ECO:0000250" key="2">
    <source>
        <dbReference type="UniProtKB" id="P01339"/>
    </source>
</evidence>
<evidence type="ECO:0000255" key="3"/>
<evidence type="ECO:0000269" key="4">
    <source ref="1"/>
</evidence>
<evidence type="ECO:0000303" key="5">
    <source ref="1"/>
</evidence>
<evidence type="ECO:0000305" key="6"/>
<sequence length="50" mass="5673">ISSQHLCGSHLVEALNLVCGDRGFFYNPRGIVEQCCHRPCSIFELENYCN</sequence>
<reference evidence="6" key="1">
    <citation type="submission" date="2014-04" db="UniProtKB">
        <title>Primary structures of two insulins from Bonito (Katsuwonus pelamis).</title>
        <authorList>
            <person name="Andoh T."/>
        </authorList>
    </citation>
    <scope>PROTEIN SEQUENCE</scope>
</reference>
<organism>
    <name type="scientific">Katsuwonus pelamis</name>
    <name type="common">Skipjack tuna</name>
    <name type="synonym">Scomber pelamis</name>
    <dbReference type="NCBI Taxonomy" id="8226"/>
    <lineage>
        <taxon>Eukaryota</taxon>
        <taxon>Metazoa</taxon>
        <taxon>Chordata</taxon>
        <taxon>Craniata</taxon>
        <taxon>Vertebrata</taxon>
        <taxon>Euteleostomi</taxon>
        <taxon>Actinopterygii</taxon>
        <taxon>Neopterygii</taxon>
        <taxon>Teleostei</taxon>
        <taxon>Neoteleostei</taxon>
        <taxon>Acanthomorphata</taxon>
        <taxon>Pelagiaria</taxon>
        <taxon>Scombriformes</taxon>
        <taxon>Scombridae</taxon>
        <taxon>Katsuwonus</taxon>
    </lineage>
</organism>
<keyword id="KW-0119">Carbohydrate metabolism</keyword>
<keyword id="KW-0903">Direct protein sequencing</keyword>
<keyword id="KW-1015">Disulfide bond</keyword>
<keyword id="KW-0313">Glucose metabolism</keyword>
<keyword id="KW-0372">Hormone</keyword>
<keyword id="KW-0964">Secreted</keyword>
<proteinExistence type="evidence at protein level"/>
<protein>
    <recommendedName>
        <fullName evidence="5">Insulin-1</fullName>
    </recommendedName>
    <component>
        <recommendedName>
            <fullName evidence="5">Insulin-1 B chain</fullName>
        </recommendedName>
    </component>
    <component>
        <recommendedName>
            <fullName evidence="5">Insulin-1 A chain</fullName>
        </recommendedName>
    </component>
</protein>
<accession>C0HJI2</accession>
<dbReference type="SMR" id="C0HJI2"/>
<dbReference type="GO" id="GO:0005615">
    <property type="term" value="C:extracellular space"/>
    <property type="evidence" value="ECO:0007669"/>
    <property type="project" value="TreeGrafter"/>
</dbReference>
<dbReference type="GO" id="GO:0005179">
    <property type="term" value="F:hormone activity"/>
    <property type="evidence" value="ECO:0007669"/>
    <property type="project" value="UniProtKB-KW"/>
</dbReference>
<dbReference type="GO" id="GO:0006006">
    <property type="term" value="P:glucose metabolic process"/>
    <property type="evidence" value="ECO:0007669"/>
    <property type="project" value="UniProtKB-KW"/>
</dbReference>
<dbReference type="CDD" id="cd04367">
    <property type="entry name" value="IlGF_insulin_like"/>
    <property type="match status" value="1"/>
</dbReference>
<dbReference type="Gene3D" id="1.10.100.10">
    <property type="entry name" value="Insulin-like"/>
    <property type="match status" value="1"/>
</dbReference>
<dbReference type="InterPro" id="IPR004825">
    <property type="entry name" value="Insulin"/>
</dbReference>
<dbReference type="InterPro" id="IPR016179">
    <property type="entry name" value="Insulin-like"/>
</dbReference>
<dbReference type="InterPro" id="IPR036438">
    <property type="entry name" value="Insulin-like_sf"/>
</dbReference>
<dbReference type="InterPro" id="IPR022353">
    <property type="entry name" value="Insulin_CS"/>
</dbReference>
<dbReference type="InterPro" id="IPR022352">
    <property type="entry name" value="Insulin_family"/>
</dbReference>
<dbReference type="PANTHER" id="PTHR11454:SF9">
    <property type="entry name" value="INSULIN"/>
    <property type="match status" value="1"/>
</dbReference>
<dbReference type="PANTHER" id="PTHR11454">
    <property type="entry name" value="INSULIN/INSULIN GROWTH FACTOR"/>
    <property type="match status" value="1"/>
</dbReference>
<dbReference type="Pfam" id="PF00049">
    <property type="entry name" value="Insulin"/>
    <property type="match status" value="1"/>
</dbReference>
<dbReference type="PRINTS" id="PR00277">
    <property type="entry name" value="INSULIN"/>
</dbReference>
<dbReference type="PRINTS" id="PR00276">
    <property type="entry name" value="INSULINFAMLY"/>
</dbReference>
<dbReference type="SMART" id="SM00078">
    <property type="entry name" value="IlGF"/>
    <property type="match status" value="1"/>
</dbReference>
<dbReference type="SUPFAM" id="SSF56994">
    <property type="entry name" value="Insulin-like"/>
    <property type="match status" value="1"/>
</dbReference>
<dbReference type="PROSITE" id="PS00262">
    <property type="entry name" value="INSULIN"/>
    <property type="match status" value="1"/>
</dbReference>
<feature type="peptide" id="PRO_0000429388" description="Insulin-1 B chain" evidence="4">
    <location>
        <begin position="1"/>
        <end position="29"/>
    </location>
</feature>
<feature type="peptide" id="PRO_0000429389" description="Insulin-1 A chain" evidence="4">
    <location>
        <begin position="30"/>
        <end position="50"/>
    </location>
</feature>
<feature type="disulfide bond" description="Interchain (between B and A chains)" evidence="2">
    <location>
        <begin position="7"/>
        <end position="36"/>
    </location>
</feature>
<feature type="disulfide bond" description="Interchain (between B and A chains)" evidence="2">
    <location>
        <begin position="19"/>
        <end position="49"/>
    </location>
</feature>
<feature type="disulfide bond" evidence="2">
    <location>
        <begin position="35"/>
        <end position="40"/>
    </location>
</feature>
<feature type="non-consecutive residues" evidence="5">
    <location>
        <begin position="29"/>
        <end position="30"/>
    </location>
</feature>
<name>INS1_KATPE</name>